<sequence length="173" mass="19629">MEEPQRARSQTVTTTASSFAENFSTTSSSFSYDREFLRTLPGLLIVAEIVLGLLVWTLIAGTEYFRVPAFGWVMFVAVFYWVLTVFFLIIYLTMTYTRIPQVPWTTVGLWFNGSAFALYLSAAIVDASSVSPERDSHNFNSWAASSFFAFLVTICYAGNTYFSFIAWRSRTIQ</sequence>
<reference key="1">
    <citation type="submission" date="2006-04" db="EMBL/GenBank/DDBJ databases">
        <authorList>
            <consortium name="NIH - Mammalian Gene Collection (MGC) project"/>
        </authorList>
    </citation>
    <scope>NUCLEOTIDE SEQUENCE [LARGE SCALE MRNA]</scope>
    <source>
        <strain>Crossbred X Angus</strain>
        <tissue>Liver</tissue>
    </source>
</reference>
<proteinExistence type="evidence at transcript level"/>
<name>CKLF8_BOVIN</name>
<gene>
    <name type="primary">CMTM8</name>
    <name type="synonym">CKLFSF8</name>
</gene>
<comment type="subcellular location">
    <subcellularLocation>
        <location>Membrane</location>
        <topology>Multi-pass membrane protein</topology>
    </subcellularLocation>
</comment>
<comment type="similarity">
    <text evidence="3">Belongs to the chemokine-like factor family.</text>
</comment>
<organism>
    <name type="scientific">Bos taurus</name>
    <name type="common">Bovine</name>
    <dbReference type="NCBI Taxonomy" id="9913"/>
    <lineage>
        <taxon>Eukaryota</taxon>
        <taxon>Metazoa</taxon>
        <taxon>Chordata</taxon>
        <taxon>Craniata</taxon>
        <taxon>Vertebrata</taxon>
        <taxon>Euteleostomi</taxon>
        <taxon>Mammalia</taxon>
        <taxon>Eutheria</taxon>
        <taxon>Laurasiatheria</taxon>
        <taxon>Artiodactyla</taxon>
        <taxon>Ruminantia</taxon>
        <taxon>Pecora</taxon>
        <taxon>Bovidae</taxon>
        <taxon>Bovinae</taxon>
        <taxon>Bos</taxon>
    </lineage>
</organism>
<dbReference type="EMBL" id="BC114787">
    <property type="protein sequence ID" value="AAI14788.1"/>
    <property type="molecule type" value="mRNA"/>
</dbReference>
<dbReference type="RefSeq" id="NP_001039823.1">
    <property type="nucleotide sequence ID" value="NM_001046358.1"/>
</dbReference>
<dbReference type="SMR" id="Q1RMP9"/>
<dbReference type="FunCoup" id="Q1RMP9">
    <property type="interactions" value="65"/>
</dbReference>
<dbReference type="STRING" id="9913.ENSBTAP00000069127"/>
<dbReference type="PaxDb" id="9913-ENSBTAP00000002237"/>
<dbReference type="Ensembl" id="ENSBTAT00000002237.3">
    <property type="protein sequence ID" value="ENSBTAP00000002237.2"/>
    <property type="gene ID" value="ENSBTAG00000001710.4"/>
</dbReference>
<dbReference type="GeneID" id="533671"/>
<dbReference type="KEGG" id="bta:533671"/>
<dbReference type="CTD" id="152189"/>
<dbReference type="VEuPathDB" id="HostDB:ENSBTAG00000001710"/>
<dbReference type="VGNC" id="VGNC:27488">
    <property type="gene designation" value="CMTM8"/>
</dbReference>
<dbReference type="eggNOG" id="KOG4788">
    <property type="taxonomic scope" value="Eukaryota"/>
</dbReference>
<dbReference type="GeneTree" id="ENSGT00940000160520"/>
<dbReference type="HOGENOM" id="CLU_103581_1_0_1"/>
<dbReference type="InParanoid" id="Q1RMP9"/>
<dbReference type="OMA" id="VRGRHNY"/>
<dbReference type="OrthoDB" id="6481667at2759"/>
<dbReference type="TreeFam" id="TF316174"/>
<dbReference type="Proteomes" id="UP000009136">
    <property type="component" value="Chromosome 22"/>
</dbReference>
<dbReference type="Bgee" id="ENSBTAG00000001710">
    <property type="expression patterns" value="Expressed in olfactory segment of nasal mucosa and 110 other cell types or tissues"/>
</dbReference>
<dbReference type="GO" id="GO:0005615">
    <property type="term" value="C:extracellular space"/>
    <property type="evidence" value="ECO:0007669"/>
    <property type="project" value="UniProtKB-KW"/>
</dbReference>
<dbReference type="GO" id="GO:0016020">
    <property type="term" value="C:membrane"/>
    <property type="evidence" value="ECO:0000318"/>
    <property type="project" value="GO_Central"/>
</dbReference>
<dbReference type="GO" id="GO:0005125">
    <property type="term" value="F:cytokine activity"/>
    <property type="evidence" value="ECO:0007669"/>
    <property type="project" value="UniProtKB-KW"/>
</dbReference>
<dbReference type="GO" id="GO:0019911">
    <property type="term" value="F:structural constituent of myelin sheath"/>
    <property type="evidence" value="ECO:0000318"/>
    <property type="project" value="GO_Central"/>
</dbReference>
<dbReference type="GO" id="GO:0006935">
    <property type="term" value="P:chemotaxis"/>
    <property type="evidence" value="ECO:0007669"/>
    <property type="project" value="UniProtKB-KW"/>
</dbReference>
<dbReference type="GO" id="GO:0042552">
    <property type="term" value="P:myelination"/>
    <property type="evidence" value="ECO:0000318"/>
    <property type="project" value="GO_Central"/>
</dbReference>
<dbReference type="InterPro" id="IPR013295">
    <property type="entry name" value="MAL"/>
</dbReference>
<dbReference type="InterPro" id="IPR008253">
    <property type="entry name" value="Marvel"/>
</dbReference>
<dbReference type="InterPro" id="IPR050578">
    <property type="entry name" value="MARVEL-CKLF_proteins"/>
</dbReference>
<dbReference type="PANTHER" id="PTHR22776:SF10">
    <property type="entry name" value="CKLF-LIKE MARVEL TRANSMEMBRANE DOMAIN-CONTAINING PROTEIN 8"/>
    <property type="match status" value="1"/>
</dbReference>
<dbReference type="PANTHER" id="PTHR22776">
    <property type="entry name" value="MARVEL-CONTAINING POTENTIAL LIPID RAFT-ASSOCIATED PROTEIN"/>
    <property type="match status" value="1"/>
</dbReference>
<dbReference type="Pfam" id="PF01284">
    <property type="entry name" value="MARVEL"/>
    <property type="match status" value="1"/>
</dbReference>
<dbReference type="PRINTS" id="PR01884">
    <property type="entry name" value="MALPROTEIN"/>
</dbReference>
<dbReference type="PROSITE" id="PS51225">
    <property type="entry name" value="MARVEL"/>
    <property type="match status" value="1"/>
</dbReference>
<feature type="chain" id="PRO_0000332211" description="CKLF-like MARVEL transmembrane domain-containing protein 8">
    <location>
        <begin position="1"/>
        <end position="173"/>
    </location>
</feature>
<feature type="transmembrane region" description="Helical" evidence="1">
    <location>
        <begin position="40"/>
        <end position="60"/>
    </location>
</feature>
<feature type="transmembrane region" description="Helical" evidence="1">
    <location>
        <begin position="70"/>
        <end position="90"/>
    </location>
</feature>
<feature type="transmembrane region" description="Helical" evidence="1">
    <location>
        <begin position="105"/>
        <end position="125"/>
    </location>
</feature>
<feature type="transmembrane region" description="Helical" evidence="1">
    <location>
        <begin position="147"/>
        <end position="167"/>
    </location>
</feature>
<feature type="domain" description="MARVEL" evidence="2">
    <location>
        <begin position="36"/>
        <end position="168"/>
    </location>
</feature>
<evidence type="ECO:0000255" key="1"/>
<evidence type="ECO:0000255" key="2">
    <source>
        <dbReference type="PROSITE-ProRule" id="PRU00581"/>
    </source>
</evidence>
<evidence type="ECO:0000305" key="3"/>
<accession>Q1RMP9</accession>
<keyword id="KW-0145">Chemotaxis</keyword>
<keyword id="KW-0202">Cytokine</keyword>
<keyword id="KW-0472">Membrane</keyword>
<keyword id="KW-1185">Reference proteome</keyword>
<keyword id="KW-0812">Transmembrane</keyword>
<keyword id="KW-1133">Transmembrane helix</keyword>
<protein>
    <recommendedName>
        <fullName>CKLF-like MARVEL transmembrane domain-containing protein 8</fullName>
    </recommendedName>
    <alternativeName>
        <fullName>Chemokine-like factor superfamily member 8</fullName>
    </alternativeName>
</protein>